<sequence length="287" mass="31327">MGGGGGGFPEPEDSVLFRRGTGESDDSDVWDDTALIKAYDKAVASFKHALKNGDISEASEKPKGTPKRKSAKNKSQRKNTTSPSKQWKVGDNCCAIWSEDGCIYPATIASIDFKRETCVVVYTGYGNREEQNLSDLLSPTSEVANIEQNAQENENESQISTDESENSSRSPLNKPNNIRSRAAPWNSFLPPPPHMPRSGLGPGKSGLNFSGPPPPPPPPPHFLSRWLPPFPAGPPMIPPPPPICPDSLDDADALGSMLISWYMSGYHTGYYMGFKQSQKEGRYSHFN</sequence>
<accession>O18870</accession>
<accession>O46481</accession>
<accession>O62700</accession>
<accession>Q9TSJ9</accession>
<keyword id="KW-0966">Cell projection</keyword>
<keyword id="KW-0963">Cytoplasm</keyword>
<keyword id="KW-1017">Isopeptide bond</keyword>
<keyword id="KW-0507">mRNA processing</keyword>
<keyword id="KW-0508">mRNA splicing</keyword>
<keyword id="KW-0524">Neurogenesis</keyword>
<keyword id="KW-0539">Nucleus</keyword>
<keyword id="KW-0597">Phosphoprotein</keyword>
<keyword id="KW-1185">Reference proteome</keyword>
<keyword id="KW-0694">RNA-binding</keyword>
<keyword id="KW-0832">Ubl conjugation</keyword>
<name>SMN_BOVIN</name>
<feature type="chain" id="PRO_0000218901" description="Survival motor neuron protein">
    <location>
        <begin position="1"/>
        <end position="287"/>
    </location>
</feature>
<feature type="domain" description="Tudor" evidence="4">
    <location>
        <begin position="86"/>
        <end position="146"/>
    </location>
</feature>
<feature type="region of interest" description="Disordered" evidence="5">
    <location>
        <begin position="1"/>
        <end position="28"/>
    </location>
</feature>
<feature type="region of interest" description="P1 (binding site for GEMIN2)" evidence="1">
    <location>
        <begin position="9"/>
        <end position="40"/>
    </location>
</feature>
<feature type="region of interest" description="Disordered" evidence="5">
    <location>
        <begin position="51"/>
        <end position="86"/>
    </location>
</feature>
<feature type="region of interest" description="Required for interaction with RPP20/POP7" evidence="1">
    <location>
        <begin position="92"/>
        <end position="204"/>
    </location>
</feature>
<feature type="region of interest" description="Disordered" evidence="5">
    <location>
        <begin position="149"/>
        <end position="221"/>
    </location>
</feature>
<feature type="region of interest" description="P2 (binding site for SM B)" evidence="1">
    <location>
        <begin position="234"/>
        <end position="261"/>
    </location>
</feature>
<feature type="region of interest" description="Required for interaction with SYNCRIP" evidence="1">
    <location>
        <begin position="273"/>
        <end position="287"/>
    </location>
</feature>
<feature type="compositionally biased region" description="Basic residues" evidence="5">
    <location>
        <begin position="64"/>
        <end position="77"/>
    </location>
</feature>
<feature type="compositionally biased region" description="Low complexity" evidence="5">
    <location>
        <begin position="149"/>
        <end position="160"/>
    </location>
</feature>
<feature type="compositionally biased region" description="Polar residues" evidence="5">
    <location>
        <begin position="167"/>
        <end position="179"/>
    </location>
</feature>
<feature type="compositionally biased region" description="Pro residues" evidence="5">
    <location>
        <begin position="211"/>
        <end position="221"/>
    </location>
</feature>
<feature type="modified residue" description="Phosphothreonine" evidence="3">
    <location>
        <position position="21"/>
    </location>
</feature>
<feature type="modified residue" description="Phosphoserine" evidence="3">
    <location>
        <position position="24"/>
    </location>
</feature>
<feature type="modified residue" description="Phosphoserine" evidence="3">
    <location>
        <position position="27"/>
    </location>
</feature>
<feature type="modified residue" description="Phosphothreonine" evidence="3">
    <location>
        <position position="65"/>
    </location>
</feature>
<feature type="modified residue" description="Phosphothreonine; by PKA" evidence="3">
    <location>
        <position position="80"/>
    </location>
</feature>
<feature type="cross-link" description="Glycyl lysine isopeptide (Lys-Gly) (interchain with G-Cter in SUMO2)" evidence="3">
    <location>
        <position position="47"/>
    </location>
</feature>
<feature type="cross-link" description="Glycyl lysine isopeptide (Lys-Gly) (interchain with G-Cter in SUMO2)" evidence="3">
    <location>
        <position position="204"/>
    </location>
</feature>
<feature type="sequence conflict" description="In Ref. 2; AAB80943." evidence="6" ref="2">
    <original>K</original>
    <variation>E</variation>
    <location>
        <position position="61"/>
    </location>
</feature>
<feature type="sequence conflict" description="In Ref. 2; AAB80943." evidence="6" ref="2">
    <original>G</original>
    <variation>A</variation>
    <location>
        <position position="64"/>
    </location>
</feature>
<dbReference type="EMBL" id="AF035322">
    <property type="protein sequence ID" value="AAC17995.1"/>
    <property type="molecule type" value="Genomic_DNA"/>
</dbReference>
<dbReference type="EMBL" id="AF035323">
    <property type="protein sequence ID" value="AAC63439.1"/>
    <property type="molecule type" value="mRNA"/>
</dbReference>
<dbReference type="EMBL" id="AF026810">
    <property type="protein sequence ID" value="AAB80943.1"/>
    <property type="molecule type" value="mRNA"/>
</dbReference>
<dbReference type="EMBL" id="AF016590">
    <property type="protein sequence ID" value="AAC04667.1"/>
    <property type="molecule type" value="Genomic_DNA"/>
</dbReference>
<dbReference type="EMBL" id="AF034259">
    <property type="protein sequence ID" value="AAD01979.1"/>
    <property type="molecule type" value="Genomic_DNA"/>
</dbReference>
<dbReference type="RefSeq" id="NP_783632.1">
    <property type="nucleotide sequence ID" value="NM_175701.1"/>
</dbReference>
<dbReference type="SMR" id="O18870"/>
<dbReference type="FunCoup" id="O18870">
    <property type="interactions" value="2166"/>
</dbReference>
<dbReference type="STRING" id="9913.ENSBTAP00000071442"/>
<dbReference type="iPTMnet" id="O18870"/>
<dbReference type="PaxDb" id="9913-ENSBTAP00000007547"/>
<dbReference type="GeneID" id="281492"/>
<dbReference type="KEGG" id="bta:281492"/>
<dbReference type="CTD" id="6607"/>
<dbReference type="VEuPathDB" id="HostDB:ENSBTAG00000005743"/>
<dbReference type="eggNOG" id="KOG4327">
    <property type="taxonomic scope" value="Eukaryota"/>
</dbReference>
<dbReference type="HOGENOM" id="CLU_077852_0_0_1"/>
<dbReference type="InParanoid" id="O18870"/>
<dbReference type="OrthoDB" id="197400at2759"/>
<dbReference type="TreeFam" id="TF318390"/>
<dbReference type="Reactome" id="R-BTA-191859">
    <property type="pathway name" value="snRNP Assembly"/>
</dbReference>
<dbReference type="Proteomes" id="UP000009136">
    <property type="component" value="Chromosome 20"/>
</dbReference>
<dbReference type="Bgee" id="ENSBTAG00000005743">
    <property type="expression patterns" value="Expressed in oocyte and 106 other cell types or tissues"/>
</dbReference>
<dbReference type="GO" id="GO:0030424">
    <property type="term" value="C:axon"/>
    <property type="evidence" value="ECO:0007669"/>
    <property type="project" value="UniProtKB-SubCell"/>
</dbReference>
<dbReference type="GO" id="GO:0015030">
    <property type="term" value="C:Cajal body"/>
    <property type="evidence" value="ECO:0000250"/>
    <property type="project" value="UniProtKB"/>
</dbReference>
<dbReference type="GO" id="GO:0005737">
    <property type="term" value="C:cytoplasm"/>
    <property type="evidence" value="ECO:0000250"/>
    <property type="project" value="UniProtKB"/>
</dbReference>
<dbReference type="GO" id="GO:0036464">
    <property type="term" value="C:cytoplasmic ribonucleoprotein granule"/>
    <property type="evidence" value="ECO:0000250"/>
    <property type="project" value="UniProtKB"/>
</dbReference>
<dbReference type="GO" id="GO:0005829">
    <property type="term" value="C:cytosol"/>
    <property type="evidence" value="ECO:0000250"/>
    <property type="project" value="UniProtKB"/>
</dbReference>
<dbReference type="GO" id="GO:0097504">
    <property type="term" value="C:Gemini of Cajal bodies"/>
    <property type="evidence" value="ECO:0000250"/>
    <property type="project" value="UniProtKB"/>
</dbReference>
<dbReference type="GO" id="GO:0043005">
    <property type="term" value="C:neuron projection"/>
    <property type="evidence" value="ECO:0000250"/>
    <property type="project" value="UniProtKB"/>
</dbReference>
<dbReference type="GO" id="GO:0005654">
    <property type="term" value="C:nucleoplasm"/>
    <property type="evidence" value="ECO:0000250"/>
    <property type="project" value="UniProtKB"/>
</dbReference>
<dbReference type="GO" id="GO:0005634">
    <property type="term" value="C:nucleus"/>
    <property type="evidence" value="ECO:0000250"/>
    <property type="project" value="UniProtKB"/>
</dbReference>
<dbReference type="GO" id="GO:0043204">
    <property type="term" value="C:perikaryon"/>
    <property type="evidence" value="ECO:0000250"/>
    <property type="project" value="UniProtKB"/>
</dbReference>
<dbReference type="GO" id="GO:0032797">
    <property type="term" value="C:SMN complex"/>
    <property type="evidence" value="ECO:0000250"/>
    <property type="project" value="UniProtKB"/>
</dbReference>
<dbReference type="GO" id="GO:0034719">
    <property type="term" value="C:SMN-Sm protein complex"/>
    <property type="evidence" value="ECO:0000250"/>
    <property type="project" value="UniProtKB"/>
</dbReference>
<dbReference type="GO" id="GO:0030018">
    <property type="term" value="C:Z disc"/>
    <property type="evidence" value="ECO:0007669"/>
    <property type="project" value="UniProtKB-SubCell"/>
</dbReference>
<dbReference type="GO" id="GO:0003723">
    <property type="term" value="F:RNA binding"/>
    <property type="evidence" value="ECO:0007669"/>
    <property type="project" value="UniProtKB-KW"/>
</dbReference>
<dbReference type="GO" id="GO:0006353">
    <property type="term" value="P:DNA-templated transcription termination"/>
    <property type="evidence" value="ECO:0000250"/>
    <property type="project" value="UniProtKB"/>
</dbReference>
<dbReference type="GO" id="GO:0007399">
    <property type="term" value="P:nervous system development"/>
    <property type="evidence" value="ECO:0007669"/>
    <property type="project" value="UniProtKB-KW"/>
</dbReference>
<dbReference type="GO" id="GO:0000387">
    <property type="term" value="P:spliceosomal snRNP assembly"/>
    <property type="evidence" value="ECO:0000250"/>
    <property type="project" value="UniProtKB"/>
</dbReference>
<dbReference type="CDD" id="cd22852">
    <property type="entry name" value="SMN_C"/>
    <property type="match status" value="1"/>
</dbReference>
<dbReference type="CDD" id="cd22851">
    <property type="entry name" value="SMN_N"/>
    <property type="match status" value="1"/>
</dbReference>
<dbReference type="CDD" id="cd20398">
    <property type="entry name" value="Tudor_SMN"/>
    <property type="match status" value="1"/>
</dbReference>
<dbReference type="FunFam" id="3.40.190.10:FF:000110">
    <property type="entry name" value="Survival motor neuron protein 1"/>
    <property type="match status" value="1"/>
</dbReference>
<dbReference type="FunFam" id="2.30.30.140:FF:000038">
    <property type="entry name" value="Survival of motor neuron-related-splicing factor 30"/>
    <property type="match status" value="1"/>
</dbReference>
<dbReference type="Gene3D" id="2.30.30.140">
    <property type="match status" value="1"/>
</dbReference>
<dbReference type="Gene3D" id="3.40.190.10">
    <property type="entry name" value="Periplasmic binding protein-like II"/>
    <property type="match status" value="1"/>
</dbReference>
<dbReference type="InterPro" id="IPR040424">
    <property type="entry name" value="Smn1"/>
</dbReference>
<dbReference type="InterPro" id="IPR047313">
    <property type="entry name" value="SMN_C"/>
</dbReference>
<dbReference type="InterPro" id="IPR049481">
    <property type="entry name" value="SMN_G2-BD"/>
</dbReference>
<dbReference type="InterPro" id="IPR010304">
    <property type="entry name" value="SMN_Tudor"/>
</dbReference>
<dbReference type="InterPro" id="IPR002999">
    <property type="entry name" value="Tudor"/>
</dbReference>
<dbReference type="InterPro" id="IPR047298">
    <property type="entry name" value="Tudor_SMN_eumet"/>
</dbReference>
<dbReference type="PANTHER" id="PTHR39267:SF1">
    <property type="entry name" value="SURVIVAL MOTOR NEURON PROTEIN"/>
    <property type="match status" value="1"/>
</dbReference>
<dbReference type="PANTHER" id="PTHR39267">
    <property type="entry name" value="SURVIVAL MOTOR NEURON-LIKE PROTEIN 1"/>
    <property type="match status" value="1"/>
</dbReference>
<dbReference type="Pfam" id="PF20636">
    <property type="entry name" value="SMN_G2-BD"/>
    <property type="match status" value="1"/>
</dbReference>
<dbReference type="Pfam" id="PF06003">
    <property type="entry name" value="SMN_Tudor"/>
    <property type="match status" value="1"/>
</dbReference>
<dbReference type="Pfam" id="PF20635">
    <property type="entry name" value="SMN_YG-box"/>
    <property type="match status" value="1"/>
</dbReference>
<dbReference type="SMART" id="SM00333">
    <property type="entry name" value="TUDOR"/>
    <property type="match status" value="1"/>
</dbReference>
<dbReference type="SUPFAM" id="SSF63748">
    <property type="entry name" value="Tudor/PWWP/MBT"/>
    <property type="match status" value="1"/>
</dbReference>
<dbReference type="PROSITE" id="PS50304">
    <property type="entry name" value="TUDOR"/>
    <property type="match status" value="1"/>
</dbReference>
<reference key="1">
    <citation type="journal article" date="1998" name="Cytogenet. Cell Genet.">
        <title>Description and physical localization of the bovine survival of motor neuron gene (SMN).</title>
        <authorList>
            <person name="Pietrowski D."/>
            <person name="Goldammer T."/>
            <person name="Meinert S."/>
            <person name="Schwerin M."/>
            <person name="Forster M."/>
        </authorList>
    </citation>
    <scope>NUCLEOTIDE SEQUENCE [GENOMIC DNA / MRNA]</scope>
</reference>
<reference key="2">
    <citation type="submission" date="1997-10" db="EMBL/GenBank/DDBJ databases">
        <title>A bovine sequence homologous to human and murine survival motor neuron gene (SMN).</title>
        <authorList>
            <person name="Rieder S."/>
            <person name="Joerg H."/>
            <person name="Neuenschwander S."/>
            <person name="Meijerink E."/>
            <person name="Stranzinger G."/>
        </authorList>
    </citation>
    <scope>NUCLEOTIDE SEQUENCE [MRNA] OF 35-123</scope>
    <source>
        <strain>Brown Swiss</strain>
    </source>
</reference>
<reference key="3">
    <citation type="submission" date="1997-07" db="EMBL/GenBank/DDBJ databases">
        <title>Bovine survival motor neuron gene.</title>
        <authorList>
            <person name="Nonneman D."/>
            <person name="Shibuya H."/>
            <person name="Kappes S."/>
            <person name="Steffen D."/>
            <person name="Johnson G.S."/>
        </authorList>
    </citation>
    <scope>NUCLEOTIDE SEQUENCE [GENOMIC DNA] OF 90-171</scope>
</reference>
<reference key="4">
    <citation type="journal article" date="1998" name="Anim. Genet.">
        <title>The bovine survival of motor neuron gene (SMN) maps to bovine chromosome 20q14.</title>
        <authorList>
            <person name="Eggen A."/>
            <person name="Masabanda J."/>
            <person name="Pfister-Genskow M."/>
            <person name="Fries R."/>
            <person name="Bishop M.D."/>
        </authorList>
    </citation>
    <scope>NUCLEOTIDE SEQUENCE [GENOMIC DNA] OF 99-141</scope>
</reference>
<proteinExistence type="evidence at transcript level"/>
<comment type="function">
    <text evidence="3">The SMN complex catalyzes the assembly of small nuclear ribonucleoproteins (snRNPs), the building blocks of the spliceosome, and thereby plays an important role in the splicing of cellular pre-mRNAs. Most spliceosomal snRNPs contain a common set of Sm proteins SNRPB, SNRPD1, SNRPD2, SNRPD3, SNRPE, SNRPF and SNRPG that assemble in a heptameric protein ring on the Sm site of the small nuclear RNA to form the core snRNP (Sm core). In the cytosol, the Sm proteins SNRPD1, SNRPD2, SNRPE, SNRPF and SNRPG are trapped in an inactive 6S pICln-Sm complex by the chaperone CLNS1A that controls the assembly of the core snRNP. To assemble core snRNPs, the SMN complex accepts the trapped 5Sm proteins from CLNS1A forming an intermediate. Binding of snRNA inside 5Sm ultimately triggers eviction of the SMN complex, thereby allowing binding of SNRPD3 and SNRPB to complete assembly of the core snRNP. Within the SMN complex, SMN1 acts as a structural backbone and together with GEMIN2 it gathers the Sm complex subunits. Ensures the correct splicing of U12 intron-containing genes that may be important for normal motor and proprioceptive neurons development. Also required for resolving RNA-DNA hybrids created by RNA polymerase II, that form R-loop in transcription terminal regions, an important step in proper transcription termination. May also play a role in the metabolism of small nucleolar ribonucleoprotein (snoRNPs).</text>
</comment>
<comment type="subunit">
    <text evidence="3">Homooligomer; may form higher order homooligomers in the dimer to octamer range. Part of the core SMN complex that contains SMN1, GEMIN2/SIP1, DDX20/GEMIN3, GEMIN4, GEMIN5, GEMIN6, GEMIN7, GEMIN8 and STRAP/UNRIP. Part of the SMN-Sm complex that contains SMN1, GEMIN2/SIP1, DDX20/GEMIN3, GEMIN4, GEMIN5, GEMIN6, GEMIN7, GEMIN8, STRAP/UNRIP and the Sm proteins SNRPB, SNRPD1, SNRPD2, SNRPD3, SNRPE, SNRPF and SNRPG. Component of an import snRNP complex composed of KPNB1, RNUT1, SMN1 and ZNF259. Interacts with DDX20, FBL, NOLA1, RNUT1, SYNCRIP and with several spliceosomal snRNP core Sm proteins, including SNRPB, SNRPD1, SNRPD2, SNRPD3, SNRPE and ILF3. Interacts with GEMIN2; the interaction is direct. Interacts with GEMIN3; the interaction is direct. Interacts with GEMIN8; the interaction is direct. Interacts with SNRPB; the interaction is direct. Interacts (via Tudor domain) with SNRPD1 (via C-terminus); the interaction is direct. Interacts with SNRPD2; the interaction is direct. Interacts (via Tudor domain) with SNRPD3 (via C-terminus); the interaction is direct. Interacts with SNRPE; the interaction is direct. Interacts with OSTF1, LSM10, LSM11 and RPP20/POP7. Interacts (via C-terminal region) with ZPR1 (via C-terminal region). Interacts (via Tudor domain) with COIL. Interacts with SETX; recruits SETX to POLR2A. Interacts with POLR2A (via the C-terminal domain (CTD)). Interacts with PRMT5. Interacts with XRN2. Interacts (via C-terminus) with FMR1 (via C-terminus); the interaction is direct and occurs in a RNA-independent manner. Interacts (via Tudor domain) with SF3B2 ('Arg-508'-methylated form). Interacts with WRAP53/TCAB1. Interacts (via Tudor domain) with ELAVL4 in an RNA-independent manner; the interaction is required for localization of ELAVL4 to RNA granules. Interacts with FRG1.</text>
</comment>
<comment type="subcellular location">
    <subcellularLocation>
        <location evidence="3">Nucleus</location>
        <location evidence="3">Gem</location>
    </subcellularLocation>
    <subcellularLocation>
        <location evidence="3">Nucleus</location>
        <location evidence="3">Cajal body</location>
    </subcellularLocation>
    <subcellularLocation>
        <location evidence="3">Cytoplasm</location>
    </subcellularLocation>
    <subcellularLocation>
        <location evidence="3">Cytoplasmic granule</location>
    </subcellularLocation>
    <subcellularLocation>
        <location evidence="3">Perikaryon</location>
    </subcellularLocation>
    <subcellularLocation>
        <location evidence="3">Cell projection</location>
        <location evidence="3">Neuron projection</location>
    </subcellularLocation>
    <subcellularLocation>
        <location evidence="2">Cell projection</location>
        <location evidence="2">Axon</location>
    </subcellularLocation>
    <subcellularLocation>
        <location evidence="2">Cytoplasm</location>
        <location evidence="2">Myofibril</location>
        <location evidence="2">Sarcomere</location>
        <location evidence="2">Z line</location>
    </subcellularLocation>
    <text evidence="2 3">Colocalizes with actin and at the Z-line of skeletal muscle (By similarity). Under stress conditions colocalizes with RPP20/POP7 in punctuated cytoplasmic granules. Colocalized and redistributed with ZPR1 from the cytoplasm to nuclear gems (Gemini of coiled bodies) and Cajal bodies. Colocalizes with FMR1 in cytoplasmic granules in the soma and neurite cell processes (By similarity).</text>
</comment>
<comment type="domain">
    <text evidence="3">The Tudor domain mediates association with dimethylarginines, which are common in snRNP proteins.</text>
</comment>
<comment type="similarity">
    <text evidence="6">Belongs to the SMN family.</text>
</comment>
<protein>
    <recommendedName>
        <fullName>Survival motor neuron protein</fullName>
    </recommendedName>
</protein>
<organism>
    <name type="scientific">Bos taurus</name>
    <name type="common">Bovine</name>
    <dbReference type="NCBI Taxonomy" id="9913"/>
    <lineage>
        <taxon>Eukaryota</taxon>
        <taxon>Metazoa</taxon>
        <taxon>Chordata</taxon>
        <taxon>Craniata</taxon>
        <taxon>Vertebrata</taxon>
        <taxon>Euteleostomi</taxon>
        <taxon>Mammalia</taxon>
        <taxon>Eutheria</taxon>
        <taxon>Laurasiatheria</taxon>
        <taxon>Artiodactyla</taxon>
        <taxon>Ruminantia</taxon>
        <taxon>Pecora</taxon>
        <taxon>Bovidae</taxon>
        <taxon>Bovinae</taxon>
        <taxon>Bos</taxon>
    </lineage>
</organism>
<gene>
    <name type="primary">SMN1</name>
    <name type="synonym">SMN</name>
</gene>
<evidence type="ECO:0000250" key="1"/>
<evidence type="ECO:0000250" key="2">
    <source>
        <dbReference type="UniProtKB" id="P97801"/>
    </source>
</evidence>
<evidence type="ECO:0000250" key="3">
    <source>
        <dbReference type="UniProtKB" id="Q16637"/>
    </source>
</evidence>
<evidence type="ECO:0000255" key="4">
    <source>
        <dbReference type="PROSITE-ProRule" id="PRU00211"/>
    </source>
</evidence>
<evidence type="ECO:0000256" key="5">
    <source>
        <dbReference type="SAM" id="MobiDB-lite"/>
    </source>
</evidence>
<evidence type="ECO:0000305" key="6"/>